<feature type="chain" id="PRO_1000092765" description="ATP phosphoribosyltransferase">
    <location>
        <begin position="1"/>
        <end position="299"/>
    </location>
</feature>
<accession>B1JPV9</accession>
<keyword id="KW-0028">Amino-acid biosynthesis</keyword>
<keyword id="KW-0067">ATP-binding</keyword>
<keyword id="KW-0963">Cytoplasm</keyword>
<keyword id="KW-0328">Glycosyltransferase</keyword>
<keyword id="KW-0368">Histidine biosynthesis</keyword>
<keyword id="KW-0460">Magnesium</keyword>
<keyword id="KW-0479">Metal-binding</keyword>
<keyword id="KW-0547">Nucleotide-binding</keyword>
<keyword id="KW-0808">Transferase</keyword>
<comment type="function">
    <text evidence="1">Catalyzes the condensation of ATP and 5-phosphoribose 1-diphosphate to form N'-(5'-phosphoribosyl)-ATP (PR-ATP). Has a crucial role in the pathway because the rate of histidine biosynthesis seems to be controlled primarily by regulation of HisG enzymatic activity.</text>
</comment>
<comment type="catalytic activity">
    <reaction evidence="1">
        <text>1-(5-phospho-beta-D-ribosyl)-ATP + diphosphate = 5-phospho-alpha-D-ribose 1-diphosphate + ATP</text>
        <dbReference type="Rhea" id="RHEA:18473"/>
        <dbReference type="ChEBI" id="CHEBI:30616"/>
        <dbReference type="ChEBI" id="CHEBI:33019"/>
        <dbReference type="ChEBI" id="CHEBI:58017"/>
        <dbReference type="ChEBI" id="CHEBI:73183"/>
        <dbReference type="EC" id="2.4.2.17"/>
    </reaction>
</comment>
<comment type="cofactor">
    <cofactor evidence="1">
        <name>Mg(2+)</name>
        <dbReference type="ChEBI" id="CHEBI:18420"/>
    </cofactor>
</comment>
<comment type="activity regulation">
    <text evidence="1">Feedback inhibited by histidine.</text>
</comment>
<comment type="pathway">
    <text evidence="1">Amino-acid biosynthesis; L-histidine biosynthesis; L-histidine from 5-phospho-alpha-D-ribose 1-diphosphate: step 1/9.</text>
</comment>
<comment type="subunit">
    <text evidence="1">Equilibrium between an active dimeric form, an inactive hexameric form and higher aggregates. Interconversion between the various forms is largely reversible and is influenced by the natural substrates and inhibitors of the enzyme.</text>
</comment>
<comment type="subcellular location">
    <subcellularLocation>
        <location evidence="1">Cytoplasm</location>
    </subcellularLocation>
</comment>
<comment type="similarity">
    <text evidence="1">Belongs to the ATP phosphoribosyltransferase family. Long subfamily.</text>
</comment>
<reference key="1">
    <citation type="submission" date="2008-02" db="EMBL/GenBank/DDBJ databases">
        <title>Complete sequence of Yersinia pseudotuberculosis YPIII.</title>
        <authorList>
            <consortium name="US DOE Joint Genome Institute"/>
            <person name="Copeland A."/>
            <person name="Lucas S."/>
            <person name="Lapidus A."/>
            <person name="Glavina del Rio T."/>
            <person name="Dalin E."/>
            <person name="Tice H."/>
            <person name="Bruce D."/>
            <person name="Goodwin L."/>
            <person name="Pitluck S."/>
            <person name="Munk A.C."/>
            <person name="Brettin T."/>
            <person name="Detter J.C."/>
            <person name="Han C."/>
            <person name="Tapia R."/>
            <person name="Schmutz J."/>
            <person name="Larimer F."/>
            <person name="Land M."/>
            <person name="Hauser L."/>
            <person name="Challacombe J.F."/>
            <person name="Green L."/>
            <person name="Lindler L.E."/>
            <person name="Nikolich M.P."/>
            <person name="Richardson P."/>
        </authorList>
    </citation>
    <scope>NUCLEOTIDE SEQUENCE [LARGE SCALE GENOMIC DNA]</scope>
    <source>
        <strain>YPIII</strain>
    </source>
</reference>
<proteinExistence type="inferred from homology"/>
<protein>
    <recommendedName>
        <fullName evidence="1">ATP phosphoribosyltransferase</fullName>
        <shortName evidence="1">ATP-PRT</shortName>
        <shortName evidence="1">ATP-PRTase</shortName>
        <ecNumber evidence="1">2.4.2.17</ecNumber>
    </recommendedName>
</protein>
<sequence length="299" mass="33456">MLDKTRLRIAMQKSGRLSDESQELLSRCGIKINLQQQRLIAFAENMPIDILRVRDDDIPGLVMDGVVDLGIIGENVLEEELLNRRAQGDDPRYFTLRRLDFGGCRLSLAAPLDAEYTGPQCLQDTRIATSYPHILKQYLDKQGVRFKSCLLNGSVEVAPRAGLADAICDLVSTGATLEANGLREVEVIYRSKACLIQRDGEMSVDKQQLIDRLMTRIQGVIQARESKYIMMHAPSERLDEIITLLPGAERPTILPLAGDKSRVAMHMVSSETLFWETMEKLKALGASSILVLPIEKMME</sequence>
<dbReference type="EC" id="2.4.2.17" evidence="1"/>
<dbReference type="EMBL" id="CP000950">
    <property type="protein sequence ID" value="ACA68802.1"/>
    <property type="molecule type" value="Genomic_DNA"/>
</dbReference>
<dbReference type="RefSeq" id="WP_002211896.1">
    <property type="nucleotide sequence ID" value="NZ_CP009792.1"/>
</dbReference>
<dbReference type="SMR" id="B1JPV9"/>
<dbReference type="GeneID" id="96665168"/>
<dbReference type="KEGG" id="ypy:YPK_2525"/>
<dbReference type="PATRIC" id="fig|502800.11.peg.3222"/>
<dbReference type="UniPathway" id="UPA00031">
    <property type="reaction ID" value="UER00006"/>
</dbReference>
<dbReference type="GO" id="GO:0005737">
    <property type="term" value="C:cytoplasm"/>
    <property type="evidence" value="ECO:0007669"/>
    <property type="project" value="UniProtKB-SubCell"/>
</dbReference>
<dbReference type="GO" id="GO:0005524">
    <property type="term" value="F:ATP binding"/>
    <property type="evidence" value="ECO:0007669"/>
    <property type="project" value="UniProtKB-KW"/>
</dbReference>
<dbReference type="GO" id="GO:0003879">
    <property type="term" value="F:ATP phosphoribosyltransferase activity"/>
    <property type="evidence" value="ECO:0007669"/>
    <property type="project" value="UniProtKB-UniRule"/>
</dbReference>
<dbReference type="GO" id="GO:0000287">
    <property type="term" value="F:magnesium ion binding"/>
    <property type="evidence" value="ECO:0007669"/>
    <property type="project" value="UniProtKB-UniRule"/>
</dbReference>
<dbReference type="GO" id="GO:0000105">
    <property type="term" value="P:L-histidine biosynthetic process"/>
    <property type="evidence" value="ECO:0007669"/>
    <property type="project" value="UniProtKB-UniRule"/>
</dbReference>
<dbReference type="CDD" id="cd13592">
    <property type="entry name" value="PBP2_HisGL2"/>
    <property type="match status" value="1"/>
</dbReference>
<dbReference type="FunFam" id="3.30.70.120:FF:000002">
    <property type="entry name" value="ATP phosphoribosyltransferase"/>
    <property type="match status" value="1"/>
</dbReference>
<dbReference type="FunFam" id="3.40.190.10:FF:000008">
    <property type="entry name" value="ATP phosphoribosyltransferase"/>
    <property type="match status" value="1"/>
</dbReference>
<dbReference type="Gene3D" id="3.30.70.120">
    <property type="match status" value="1"/>
</dbReference>
<dbReference type="Gene3D" id="3.40.190.10">
    <property type="entry name" value="Periplasmic binding protein-like II"/>
    <property type="match status" value="2"/>
</dbReference>
<dbReference type="HAMAP" id="MF_00079">
    <property type="entry name" value="HisG_Long"/>
    <property type="match status" value="1"/>
</dbReference>
<dbReference type="InterPro" id="IPR020621">
    <property type="entry name" value="ATP-PRT_HisG_long"/>
</dbReference>
<dbReference type="InterPro" id="IPR013820">
    <property type="entry name" value="ATP_PRibTrfase_cat"/>
</dbReference>
<dbReference type="InterPro" id="IPR018198">
    <property type="entry name" value="ATP_PRibTrfase_CS"/>
</dbReference>
<dbReference type="InterPro" id="IPR001348">
    <property type="entry name" value="ATP_PRibTrfase_HisG"/>
</dbReference>
<dbReference type="InterPro" id="IPR013115">
    <property type="entry name" value="HisG_C"/>
</dbReference>
<dbReference type="InterPro" id="IPR011322">
    <property type="entry name" value="N-reg_PII-like_a/b"/>
</dbReference>
<dbReference type="InterPro" id="IPR015867">
    <property type="entry name" value="N-reg_PII/ATP_PRibTrfase_C"/>
</dbReference>
<dbReference type="NCBIfam" id="TIGR00070">
    <property type="entry name" value="hisG"/>
    <property type="match status" value="1"/>
</dbReference>
<dbReference type="NCBIfam" id="TIGR03455">
    <property type="entry name" value="HisG_C-term"/>
    <property type="match status" value="1"/>
</dbReference>
<dbReference type="PANTHER" id="PTHR21403:SF8">
    <property type="entry name" value="ATP PHOSPHORIBOSYLTRANSFERASE"/>
    <property type="match status" value="1"/>
</dbReference>
<dbReference type="PANTHER" id="PTHR21403">
    <property type="entry name" value="ATP PHOSPHORIBOSYLTRANSFERASE ATP-PRTASE"/>
    <property type="match status" value="1"/>
</dbReference>
<dbReference type="Pfam" id="PF01634">
    <property type="entry name" value="HisG"/>
    <property type="match status" value="1"/>
</dbReference>
<dbReference type="Pfam" id="PF08029">
    <property type="entry name" value="HisG_C"/>
    <property type="match status" value="1"/>
</dbReference>
<dbReference type="SUPFAM" id="SSF54913">
    <property type="entry name" value="GlnB-like"/>
    <property type="match status" value="1"/>
</dbReference>
<dbReference type="SUPFAM" id="SSF53850">
    <property type="entry name" value="Periplasmic binding protein-like II"/>
    <property type="match status" value="1"/>
</dbReference>
<dbReference type="PROSITE" id="PS01316">
    <property type="entry name" value="ATP_P_PHORIBOSYLTR"/>
    <property type="match status" value="1"/>
</dbReference>
<name>HIS1_YERPY</name>
<gene>
    <name evidence="1" type="primary">hisG</name>
    <name type="ordered locus">YPK_2525</name>
</gene>
<organism>
    <name type="scientific">Yersinia pseudotuberculosis serotype O:3 (strain YPIII)</name>
    <dbReference type="NCBI Taxonomy" id="502800"/>
    <lineage>
        <taxon>Bacteria</taxon>
        <taxon>Pseudomonadati</taxon>
        <taxon>Pseudomonadota</taxon>
        <taxon>Gammaproteobacteria</taxon>
        <taxon>Enterobacterales</taxon>
        <taxon>Yersiniaceae</taxon>
        <taxon>Yersinia</taxon>
    </lineage>
</organism>
<evidence type="ECO:0000255" key="1">
    <source>
        <dbReference type="HAMAP-Rule" id="MF_00079"/>
    </source>
</evidence>